<accession>P19475</accession>
<keyword id="KW-0167">Capsid protein</keyword>
<keyword id="KW-0143">Chaperone</keyword>
<keyword id="KW-0175">Coiled coil</keyword>
<keyword id="KW-0255">Endonuclease</keyword>
<keyword id="KW-1139">Helical capsid protein</keyword>
<keyword id="KW-1035">Host cytoplasm</keyword>
<keyword id="KW-1040">Host Golgi apparatus</keyword>
<keyword id="KW-0378">Hydrolase</keyword>
<keyword id="KW-0540">Nuclease</keyword>
<keyword id="KW-0687">Ribonucleoprotein</keyword>
<keyword id="KW-0694">RNA-binding</keyword>
<keyword id="KW-0543">Viral nucleoprotein</keyword>
<keyword id="KW-0946">Virion</keyword>
<comment type="function">
    <text evidence="1 2 5 9">Encapsidates the genome protecting it from nucleases (Probable). The encapsidated genomic RNA is termed the nucleocapsid (NC) and serves as template for transcription and replication (Probable). The nucleocapsid has a left-handed helical structure (By similarity). As a trimer, specifically binds and acts as a chaperone to unwind the panhandle structure formed by the viral RNA (vRNA) termini (By similarity). Involved in the transcription and replication initiation of vRNA by mediating primer annealing (By similarity). Plays a role in cap snatching by sequestering capped RNAs in P bodies for use by the viral RdRp during transcription initiation (By similarity). Substitutes for the cellular cap-binding complex (eIF4F) to preferentially facilitate the translation of capped mRNAs (By similarity). Initiates the translation by specifically binding to the cap and 40S ribosomal subunit (By similarity). Prevents the viral glycoprotein N (Gn) from autophagy-dependent breakdown maybe by blocking autophagosome formation (By similarity). Inhibits host EIF2AK2/PKR dimerization to prevent PKR-induced translational shutdown in cells and thus the activation of the antiviral state (By similarity). Also displays sequence-unspecific DNA endonuclease activity (By similarity).</text>
</comment>
<comment type="subunit">
    <text evidence="2 3 4 5">Homotrimer (By similarity). Homomultimer (By similarity). Homomultimerizes and binds to viral genomic RNA to form the nucleocapsid (By similarity). Interacts with host MAP1LC3B; this interaction participates to the protection of Gn from virus-triggered autophagy (By similarity). Interacts with host SNAP29; this interaction participates to the protection of glycoprotein N from virus-triggered autophagy (By similarity). Interacts (via N-terminus) with host RPS19; this interaction probably mediates the loading of the 40S ribosomal subunit on viral capped mRNA during N-mediated translation initiation (By similarity). Interacts with the viral RdRp (By similarity). Interacts with host SUMO1 (via N-terminus) (By similarity). Interacts with host DAXX (By similarity). Interacts with the viral glycoprotein N (via C-terminus) (By similarity). Interacts with the viral glycoprotein C (via C-terminus) (By similarity).</text>
</comment>
<comment type="subcellular location">
    <subcellularLocation>
        <location evidence="2">Virion</location>
    </subcellularLocation>
    <subcellularLocation>
        <location evidence="2">Host cytoplasm</location>
        <location evidence="2">Host perinuclear region</location>
    </subcellularLocation>
    <subcellularLocation>
        <location evidence="2">Host Golgi apparatus</location>
        <location evidence="2">Host cis-Golgi network</location>
    </subcellularLocation>
    <text evidence="2">Internal protein of virus particle.</text>
</comment>
<comment type="domain">
    <text evidence="2 5 8">The N-terminus is required for chaperone activity and, in trimeric form, this region likely serves in high affinity vRNA panhandle recognition (By similarity). The N-terminus also contains a coiled coil region, which probably participates in but is insufficient to initiate N trimerization (PubMed:16972031). The YxxL motif is indispensable for the interaction with host MAP1LC3B (By similarity). The central region is involved in specific RNA-binding (By similarity). Has distinct cap- and RNA-binding sites so it can bind simultaneously both the vRNA and mRNA cap (By similarity).</text>
</comment>
<comment type="similarity">
    <text evidence="9">Belongs to the hantavirus nucleocapsid protein family.</text>
</comment>
<comment type="caution">
    <text evidence="10">The sequence was wrongly described as Hallnas B1 strain.</text>
</comment>
<organism>
    <name type="scientific">Puumala virus (strain Bank vole/Russia/CG1820/1984)</name>
    <dbReference type="NCBI Taxonomy" id="1337063"/>
    <lineage>
        <taxon>Viruses</taxon>
        <taxon>Riboviria</taxon>
        <taxon>Orthornavirae</taxon>
        <taxon>Negarnaviricota</taxon>
        <taxon>Polyploviricotina</taxon>
        <taxon>Ellioviricetes</taxon>
        <taxon>Bunyavirales</taxon>
        <taxon>Hantaviridae</taxon>
        <taxon>Mammantavirinae</taxon>
        <taxon>Orthohantavirus</taxon>
        <taxon>Orthohantavirus puumalaense</taxon>
    </lineage>
</organism>
<dbReference type="EC" id="3.1.-.-" evidence="5"/>
<dbReference type="EMBL" id="M32750">
    <property type="protein sequence ID" value="AAA47116.1"/>
    <property type="molecule type" value="Genomic_RNA"/>
</dbReference>
<dbReference type="PIR" id="A33773">
    <property type="entry name" value="VHVUNE"/>
</dbReference>
<dbReference type="SMR" id="P19475"/>
<dbReference type="Proteomes" id="UP000008481">
    <property type="component" value="Genome"/>
</dbReference>
<dbReference type="GO" id="GO:0019029">
    <property type="term" value="C:helical viral capsid"/>
    <property type="evidence" value="ECO:0007669"/>
    <property type="project" value="UniProtKB-KW"/>
</dbReference>
<dbReference type="GO" id="GO:0044177">
    <property type="term" value="C:host cell Golgi apparatus"/>
    <property type="evidence" value="ECO:0007669"/>
    <property type="project" value="UniProtKB-SubCell"/>
</dbReference>
<dbReference type="GO" id="GO:0044220">
    <property type="term" value="C:host cell perinuclear region of cytoplasm"/>
    <property type="evidence" value="ECO:0007669"/>
    <property type="project" value="UniProtKB-SubCell"/>
</dbReference>
<dbReference type="GO" id="GO:1990904">
    <property type="term" value="C:ribonucleoprotein complex"/>
    <property type="evidence" value="ECO:0007669"/>
    <property type="project" value="UniProtKB-KW"/>
</dbReference>
<dbReference type="GO" id="GO:0019013">
    <property type="term" value="C:viral nucleocapsid"/>
    <property type="evidence" value="ECO:0007669"/>
    <property type="project" value="UniProtKB-KW"/>
</dbReference>
<dbReference type="GO" id="GO:0004519">
    <property type="term" value="F:endonuclease activity"/>
    <property type="evidence" value="ECO:0007669"/>
    <property type="project" value="UniProtKB-KW"/>
</dbReference>
<dbReference type="GO" id="GO:0003723">
    <property type="term" value="F:RNA binding"/>
    <property type="evidence" value="ECO:0007669"/>
    <property type="project" value="UniProtKB-KW"/>
</dbReference>
<dbReference type="Gene3D" id="1.20.58.90">
    <property type="match status" value="1"/>
</dbReference>
<dbReference type="InterPro" id="IPR002214">
    <property type="entry name" value="Hanta_nucleocap"/>
</dbReference>
<dbReference type="Pfam" id="PF00846">
    <property type="entry name" value="Hanta_nucleocap"/>
    <property type="match status" value="1"/>
</dbReference>
<dbReference type="PIRSF" id="PIRSF003949">
    <property type="entry name" value="N_HantaV"/>
    <property type="match status" value="1"/>
</dbReference>
<protein>
    <recommendedName>
        <fullName>Nucleoprotein</fullName>
        <ecNumber evidence="5">3.1.-.-</ecNumber>
    </recommendedName>
    <alternativeName>
        <fullName>Nucleocapsid protein</fullName>
        <shortName>Protein N</shortName>
    </alternativeName>
</protein>
<sequence>MSDLTDIQEEITRHEQQLVVARQKLKDAERAVEVDPDDVNKSTLQARQQTVSALEDKLADYKRRMADAVSRKKMDTKPTDPTGIEPDDHLKERSSLRYGNVLDVNAIDIEEPSGQTADWYTIGVYVIGFTIPIILKALYMLSTRGRQTVKENKGTRIRFKDDTSFEDINGIRRPKHLYVSMPTAQSTMKAEELTPGRFRTIVCGLFPTQIQVRNIMSPVMGVIGFSFFVKDWPEKIREFMEKECPFIKPEVKPGTPAQEVEFLKRNRVYFMTRQDVLDKNHVADIDKLIDYAASGDPTSPDDIESPNAPWVFACAPDRCPPTCIYVAGMAELGAFFSILQDMRNTIMASKTVGTAEEKLKKKSSFYQSYLRRTQSMGIQLDQRIILLYMLEWGREMVDHFHLGDDMDPELRGLAQSLIDQKVKEISNQEPLKI</sequence>
<gene>
    <name type="primary">N</name>
</gene>
<proteinExistence type="inferred from homology"/>
<evidence type="ECO:0000250" key="1">
    <source>
        <dbReference type="UniProtKB" id="O36307"/>
    </source>
</evidence>
<evidence type="ECO:0000250" key="2">
    <source>
        <dbReference type="UniProtKB" id="P05133"/>
    </source>
</evidence>
<evidence type="ECO:0000250" key="3">
    <source>
        <dbReference type="UniProtKB" id="P27313"/>
    </source>
</evidence>
<evidence type="ECO:0000250" key="4">
    <source>
        <dbReference type="UniProtKB" id="Q88918"/>
    </source>
</evidence>
<evidence type="ECO:0000250" key="5">
    <source>
        <dbReference type="UniProtKB" id="Q89462"/>
    </source>
</evidence>
<evidence type="ECO:0000255" key="6"/>
<evidence type="ECO:0000256" key="7">
    <source>
        <dbReference type="SAM" id="MobiDB-lite"/>
    </source>
</evidence>
<evidence type="ECO:0000269" key="8">
    <source>
    </source>
</evidence>
<evidence type="ECO:0000305" key="9"/>
<evidence type="ECO:0000305" key="10">
    <source>
    </source>
</evidence>
<organismHost>
    <name type="scientific">Homo sapiens</name>
    <name type="common">Human</name>
    <dbReference type="NCBI Taxonomy" id="9606"/>
</organismHost>
<organismHost>
    <name type="scientific">Myodes glareolus</name>
    <name type="common">Bank vole</name>
    <name type="synonym">Clethrionomys glareolus</name>
    <dbReference type="NCBI Taxonomy" id="447135"/>
</organismHost>
<reference key="1">
    <citation type="journal article" date="1990" name="Virology">
        <title>Molecular characterization of the RNA S segment of nephropathia epidemica virus strain Hallnas B1.</title>
        <authorList>
            <person name="Stohwasser R."/>
            <person name="Giebel L.B."/>
            <person name="Zoeller L."/>
            <person name="Bautz E.K.F."/>
            <person name="Darai G."/>
        </authorList>
    </citation>
    <scope>NUCLEOTIDE SEQUENCE [GENOMIC RNA]</scope>
</reference>
<reference key="2">
    <citation type="journal article" date="2006" name="Virus Genes">
        <title>Regions of importance for interaction of puumala virus nucleocapsid subunits.</title>
        <authorList>
            <person name="Lindgren L."/>
            <person name="Lindkvist M."/>
            <person name="Overby A."/>
            <person name="Ahlm C."/>
            <person name="Bucht G."/>
            <person name="Holmstroem A."/>
        </authorList>
    </citation>
    <scope>DOMAIN</scope>
    <source>
        <strain>Isolate Umea</strain>
    </source>
</reference>
<feature type="chain" id="PRO_0000222013" description="Nucleoprotein">
    <location>
        <begin position="1"/>
        <end position="433"/>
    </location>
</feature>
<feature type="region of interest" description="Viral panhandle binding" evidence="5">
    <location>
        <begin position="1"/>
        <end position="175"/>
    </location>
</feature>
<feature type="region of interest" description="Chaperone activity" evidence="5">
    <location>
        <begin position="1"/>
        <end position="100"/>
    </location>
</feature>
<feature type="region of interest" description="Homomultimerization" evidence="4">
    <location>
        <begin position="1"/>
        <end position="79"/>
    </location>
</feature>
<feature type="region of interest" description="RdRP binding" evidence="5">
    <location>
        <begin position="1"/>
        <end position="50"/>
    </location>
</feature>
<feature type="region of interest" description="Disordered" evidence="7">
    <location>
        <begin position="68"/>
        <end position="92"/>
    </location>
</feature>
<feature type="region of interest" description="Interaction with glycoprotein N" evidence="4">
    <location>
        <begin position="80"/>
        <end position="248"/>
    </location>
</feature>
<feature type="region of interest" description="Homomultimerization" evidence="8">
    <location>
        <begin position="100"/>
        <end position="120"/>
    </location>
</feature>
<feature type="region of interest" description="Interaction with host RPS19" evidence="5">
    <location>
        <begin position="150"/>
        <end position="175"/>
    </location>
</feature>
<feature type="region of interest" description="Viral RNA-binding" evidence="2">
    <location>
        <begin position="175"/>
        <end position="217"/>
    </location>
</feature>
<feature type="region of interest" description="Interaction with host UBE2I/UBC9" evidence="2">
    <location>
        <begin position="188"/>
        <end position="191"/>
    </location>
</feature>
<feature type="region of interest" description="Homomultimerization" evidence="4">
    <location>
        <begin position="330"/>
        <end position="405"/>
    </location>
</feature>
<feature type="region of interest" description="Interaction with host DAXX" evidence="3">
    <location>
        <begin position="377"/>
        <end position="433"/>
    </location>
</feature>
<feature type="coiled-coil region" evidence="6">
    <location>
        <begin position="4"/>
        <end position="71"/>
    </location>
</feature>
<feature type="short sequence motif" description="YxxL" evidence="2">
    <location>
        <begin position="178"/>
        <end position="181"/>
    </location>
</feature>
<feature type="compositionally biased region" description="Basic and acidic residues" evidence="7">
    <location>
        <begin position="68"/>
        <end position="78"/>
    </location>
</feature>
<feature type="site" description="Important for the endonuclease activity" evidence="5">
    <location>
        <position position="88"/>
    </location>
</feature>
<feature type="site" description="Important for the endonuclease activity" evidence="5">
    <location>
        <position position="103"/>
    </location>
</feature>
<name>NCAP_PUUMG</name>